<gene>
    <name type="primary">scnA</name>
</gene>
<comment type="function">
    <text>Lanthionine-containing peptide antibiotic (lantibiotic) active on certain Gram-positive bacteria. The bactericidal activity of lantibiotics is based on depolarization of energized bacterial cytoplasmic membranes, initiated by the formation of aqueous transmembrane pores.</text>
</comment>
<comment type="subcellular location">
    <subcellularLocation>
        <location>Secreted</location>
    </subcellularLocation>
    <subcellularLocation>
        <location>Cell surface</location>
    </subcellularLocation>
    <text>Either cell associated or in a released extracellular form.</text>
</comment>
<comment type="PTM">
    <text>Maturation of lantibiotics involves the enzymatic conversion of Thr, and Ser into dehydrated AA and the formation of thioether bonds with cysteine. This is followed by membrane translocation and cleavage of the modified precursor.</text>
</comment>
<comment type="similarity">
    <text evidence="2">Belongs to the type A lantibiotic family.</text>
</comment>
<dbReference type="EMBL" id="AF026542">
    <property type="protein sequence ID" value="AAB92600.1"/>
    <property type="molecule type" value="Genomic_DNA"/>
</dbReference>
<dbReference type="PIR" id="T09004">
    <property type="entry name" value="T09004"/>
</dbReference>
<dbReference type="RefSeq" id="WP_023612114.1">
    <property type="nucleotide sequence ID" value="NZ_WVHC01000001.1"/>
</dbReference>
<dbReference type="GO" id="GO:0009986">
    <property type="term" value="C:cell surface"/>
    <property type="evidence" value="ECO:0007669"/>
    <property type="project" value="UniProtKB-SubCell"/>
</dbReference>
<dbReference type="GO" id="GO:0005576">
    <property type="term" value="C:extracellular region"/>
    <property type="evidence" value="ECO:0007669"/>
    <property type="project" value="UniProtKB-SubCell"/>
</dbReference>
<dbReference type="GO" id="GO:0005102">
    <property type="term" value="F:signaling receptor binding"/>
    <property type="evidence" value="ECO:0007669"/>
    <property type="project" value="UniProtKB-KW"/>
</dbReference>
<dbReference type="GO" id="GO:0042742">
    <property type="term" value="P:defense response to bacterium"/>
    <property type="evidence" value="ECO:0007669"/>
    <property type="project" value="UniProtKB-KW"/>
</dbReference>
<dbReference type="GO" id="GO:0031640">
    <property type="term" value="P:killing of cells of another organism"/>
    <property type="evidence" value="ECO:0007669"/>
    <property type="project" value="UniProtKB-KW"/>
</dbReference>
<dbReference type="InterPro" id="IPR007682">
    <property type="entry name" value="Lantibiotic_typ-A_Lactobact"/>
</dbReference>
<dbReference type="NCBIfam" id="NF040664">
    <property type="entry name" value="HEC_x9_TCC_lant"/>
    <property type="match status" value="1"/>
</dbReference>
<dbReference type="Pfam" id="PF04604">
    <property type="entry name" value="L_biotic_typeA"/>
    <property type="match status" value="1"/>
</dbReference>
<sequence>MEKNNEVINSIQEVSLEELDQIIGAGKNGVFKTISHECHLNTWAFLATCCS</sequence>
<reference key="1">
    <citation type="journal article" date="1993" name="Appl. Environ. Microbiol.">
        <title>Cloning of the gene encoding Streptococcin A-FF22, a novel lantibiotic produced by Streptococcus pyogenes, and determination of its nucleotide sequence.</title>
        <authorList>
            <person name="Hynes W.L."/>
            <person name="Ferretti J.J."/>
            <person name="Tagg J.R."/>
        </authorList>
    </citation>
    <scope>NUCLEOTIDE SEQUENCE [GENOMIC DNA]</scope>
    <source>
        <strain>FF22</strain>
    </source>
</reference>
<reference key="2">
    <citation type="submission" date="1997-10" db="EMBL/GenBank/DDBJ databases">
        <authorList>
            <person name="McLaughlin R.E."/>
            <person name="Hynes W.L."/>
        </authorList>
    </citation>
    <scope>NUCLEOTIDE SEQUENCE [GENOMIC DNA]</scope>
    <source>
        <strain>FF22</strain>
    </source>
</reference>
<reference key="3">
    <citation type="journal article" date="1994" name="Eur. J. Biochem.">
        <title>Elucidation of the structure of SA-FF22, a lanthionine-containing antibacterial peptide produced by Streptococcus pyogenes strain FF22.</title>
        <authorList>
            <person name="Jack R.W."/>
            <person name="Carne A."/>
            <person name="Metzger J."/>
            <person name="Stefanovic S."/>
            <person name="Sahl H.-G."/>
            <person name="Jung G."/>
            <person name="Tagg J.R."/>
        </authorList>
    </citation>
    <scope>PROTEIN SEQUENCE OF 26-51</scope>
    <scope>DEHYDRATION AT THR-48</scope>
    <scope>LANTHIONINE CROSS-LINKS</scope>
    <source>
        <strain>FF22</strain>
    </source>
</reference>
<name>LANA_STRPY</name>
<protein>
    <recommendedName>
        <fullName>Lantibiotic streptococcin A-FF22</fullName>
    </recommendedName>
    <alternativeName>
        <fullName>Antibacterial peptide SA-FF22</fullName>
    </alternativeName>
</protein>
<keyword id="KW-0044">Antibiotic</keyword>
<keyword id="KW-0929">Antimicrobial</keyword>
<keyword id="KW-0078">Bacteriocin</keyword>
<keyword id="KW-0903">Direct protein sequencing</keyword>
<keyword id="KW-0425">Lantibiotic</keyword>
<keyword id="KW-0614">Plasmid</keyword>
<keyword id="KW-0964">Secreted</keyword>
<keyword id="KW-0883">Thioether bond</keyword>
<accession>P36501</accession>
<evidence type="ECO:0000269" key="1">
    <source>
    </source>
</evidence>
<evidence type="ECO:0000305" key="2"/>
<feature type="propeptide" id="PRO_0000017134" evidence="1">
    <location>
        <begin position="1"/>
        <end position="25"/>
    </location>
</feature>
<feature type="peptide" id="PRO_0000017135" description="Lantibiotic streptococcin A-FF22">
    <location>
        <begin position="26"/>
        <end position="51"/>
    </location>
</feature>
<feature type="modified residue" description="2,3-didehydrobutyrine" evidence="1">
    <location>
        <position position="48"/>
    </location>
</feature>
<feature type="cross-link" description="Beta-methyllanthionine (Thr-Cys)" evidence="1">
    <location>
        <begin position="33"/>
        <end position="38"/>
    </location>
</feature>
<feature type="cross-link" description="Lanthionine (Ser-Cys)" evidence="1">
    <location>
        <begin position="35"/>
        <end position="49"/>
    </location>
</feature>
<feature type="cross-link" description="Beta-methyllanthionine (Thr-Cys)" evidence="1">
    <location>
        <begin position="42"/>
        <end position="50"/>
    </location>
</feature>
<geneLocation type="plasmid"/>
<proteinExistence type="evidence at protein level"/>
<organism>
    <name type="scientific">Streptococcus pyogenes</name>
    <dbReference type="NCBI Taxonomy" id="1314"/>
    <lineage>
        <taxon>Bacteria</taxon>
        <taxon>Bacillati</taxon>
        <taxon>Bacillota</taxon>
        <taxon>Bacilli</taxon>
        <taxon>Lactobacillales</taxon>
        <taxon>Streptococcaceae</taxon>
        <taxon>Streptococcus</taxon>
    </lineage>
</organism>